<reference key="1">
    <citation type="journal article" date="2006" name="J. Bacteriol.">
        <title>Comparative genomic analysis of three strains of Ehrlichia ruminantium reveals an active process of genome size plasticity.</title>
        <authorList>
            <person name="Frutos R."/>
            <person name="Viari A."/>
            <person name="Ferraz C."/>
            <person name="Morgat A."/>
            <person name="Eychenie S."/>
            <person name="Kandassamy Y."/>
            <person name="Chantal I."/>
            <person name="Bensaid A."/>
            <person name="Coissac E."/>
            <person name="Vachiery N."/>
            <person name="Demaille J."/>
            <person name="Martinez D."/>
        </authorList>
    </citation>
    <scope>NUCLEOTIDE SEQUENCE [LARGE SCALE GENOMIC DNA]</scope>
    <source>
        <strain>Gardel</strain>
    </source>
</reference>
<sequence>MFHNLLGKNKIFSHHDRYVNDYIINVKDLSFAYAKKKVIDNVSFQVKFGEIITILGPNGGGKTTLIRILVGIYKNYLGIVEYAKNFVIGYLPQNFSVNSLIPMTVEYFLVSSYTKQRKKLNLNSVLKDVNVVKILNRQMSEISHGELQLVLLARCLMLNPDIIILDEPVSCMDINAKDSFYKLINQLILRYNLSVIMTSHDLHFVMANSYRVICINKSIYCEGSPSEIVKNEKFLKMFSSYA</sequence>
<organism>
    <name type="scientific">Ehrlichia ruminantium (strain Gardel)</name>
    <dbReference type="NCBI Taxonomy" id="302409"/>
    <lineage>
        <taxon>Bacteria</taxon>
        <taxon>Pseudomonadati</taxon>
        <taxon>Pseudomonadota</taxon>
        <taxon>Alphaproteobacteria</taxon>
        <taxon>Rickettsiales</taxon>
        <taxon>Anaplasmataceae</taxon>
        <taxon>Ehrlichia</taxon>
    </lineage>
</organism>
<dbReference type="EC" id="7.2.2.20" evidence="1"/>
<dbReference type="EMBL" id="CR925677">
    <property type="protein sequence ID" value="CAI27711.1"/>
    <property type="molecule type" value="Genomic_DNA"/>
</dbReference>
<dbReference type="RefSeq" id="WP_011154943.1">
    <property type="nucleotide sequence ID" value="NC_006831.1"/>
</dbReference>
<dbReference type="SMR" id="Q5FHB0"/>
<dbReference type="KEGG" id="erg:ERGA_CDS_02590"/>
<dbReference type="HOGENOM" id="CLU_000604_1_11_5"/>
<dbReference type="OrthoDB" id="9780942at2"/>
<dbReference type="Proteomes" id="UP000000533">
    <property type="component" value="Chromosome"/>
</dbReference>
<dbReference type="GO" id="GO:0005886">
    <property type="term" value="C:plasma membrane"/>
    <property type="evidence" value="ECO:0007669"/>
    <property type="project" value="UniProtKB-SubCell"/>
</dbReference>
<dbReference type="GO" id="GO:0015633">
    <property type="term" value="F:ABC-type zinc transporter activity"/>
    <property type="evidence" value="ECO:0007669"/>
    <property type="project" value="UniProtKB-EC"/>
</dbReference>
<dbReference type="GO" id="GO:0005524">
    <property type="term" value="F:ATP binding"/>
    <property type="evidence" value="ECO:0007669"/>
    <property type="project" value="UniProtKB-KW"/>
</dbReference>
<dbReference type="GO" id="GO:0016887">
    <property type="term" value="F:ATP hydrolysis activity"/>
    <property type="evidence" value="ECO:0007669"/>
    <property type="project" value="InterPro"/>
</dbReference>
<dbReference type="Gene3D" id="3.40.50.300">
    <property type="entry name" value="P-loop containing nucleotide triphosphate hydrolases"/>
    <property type="match status" value="1"/>
</dbReference>
<dbReference type="InterPro" id="IPR003593">
    <property type="entry name" value="AAA+_ATPase"/>
</dbReference>
<dbReference type="InterPro" id="IPR003439">
    <property type="entry name" value="ABC_transporter-like_ATP-bd"/>
</dbReference>
<dbReference type="InterPro" id="IPR017871">
    <property type="entry name" value="ABC_transporter-like_CS"/>
</dbReference>
<dbReference type="InterPro" id="IPR050153">
    <property type="entry name" value="Metal_Ion_Import_ABC"/>
</dbReference>
<dbReference type="InterPro" id="IPR027417">
    <property type="entry name" value="P-loop_NTPase"/>
</dbReference>
<dbReference type="PANTHER" id="PTHR42734">
    <property type="entry name" value="METAL TRANSPORT SYSTEM ATP-BINDING PROTEIN TM_0124-RELATED"/>
    <property type="match status" value="1"/>
</dbReference>
<dbReference type="PANTHER" id="PTHR42734:SF17">
    <property type="entry name" value="METAL TRANSPORT SYSTEM ATP-BINDING PROTEIN TM_0124-RELATED"/>
    <property type="match status" value="1"/>
</dbReference>
<dbReference type="Pfam" id="PF00005">
    <property type="entry name" value="ABC_tran"/>
    <property type="match status" value="1"/>
</dbReference>
<dbReference type="SMART" id="SM00382">
    <property type="entry name" value="AAA"/>
    <property type="match status" value="1"/>
</dbReference>
<dbReference type="SUPFAM" id="SSF52540">
    <property type="entry name" value="P-loop containing nucleoside triphosphate hydrolases"/>
    <property type="match status" value="1"/>
</dbReference>
<dbReference type="PROSITE" id="PS00211">
    <property type="entry name" value="ABC_TRANSPORTER_1"/>
    <property type="match status" value="1"/>
</dbReference>
<dbReference type="PROSITE" id="PS50893">
    <property type="entry name" value="ABC_TRANSPORTER_2"/>
    <property type="match status" value="1"/>
</dbReference>
<dbReference type="PROSITE" id="PS51298">
    <property type="entry name" value="ZNUC"/>
    <property type="match status" value="1"/>
</dbReference>
<keyword id="KW-0067">ATP-binding</keyword>
<keyword id="KW-0997">Cell inner membrane</keyword>
<keyword id="KW-1003">Cell membrane</keyword>
<keyword id="KW-0406">Ion transport</keyword>
<keyword id="KW-0472">Membrane</keyword>
<keyword id="KW-0547">Nucleotide-binding</keyword>
<keyword id="KW-1278">Translocase</keyword>
<keyword id="KW-0813">Transport</keyword>
<keyword id="KW-0862">Zinc</keyword>
<keyword id="KW-0864">Zinc transport</keyword>
<feature type="chain" id="PRO_0000281502" description="Zinc import ATP-binding protein ZnuC">
    <location>
        <begin position="1"/>
        <end position="242"/>
    </location>
</feature>
<feature type="domain" description="ABC transporter" evidence="1">
    <location>
        <begin position="24"/>
        <end position="241"/>
    </location>
</feature>
<feature type="binding site" evidence="1">
    <location>
        <begin position="56"/>
        <end position="63"/>
    </location>
    <ligand>
        <name>ATP</name>
        <dbReference type="ChEBI" id="CHEBI:30616"/>
    </ligand>
</feature>
<evidence type="ECO:0000255" key="1">
    <source>
        <dbReference type="HAMAP-Rule" id="MF_01725"/>
    </source>
</evidence>
<comment type="function">
    <text evidence="1">Part of the ABC transporter complex ZnuABC involved in zinc import. Responsible for energy coupling to the transport system.</text>
</comment>
<comment type="catalytic activity">
    <reaction evidence="1">
        <text>Zn(2+)(out) + ATP(in) + H2O(in) = Zn(2+)(in) + ADP(in) + phosphate(in) + H(+)(in)</text>
        <dbReference type="Rhea" id="RHEA:29795"/>
        <dbReference type="ChEBI" id="CHEBI:15377"/>
        <dbReference type="ChEBI" id="CHEBI:15378"/>
        <dbReference type="ChEBI" id="CHEBI:29105"/>
        <dbReference type="ChEBI" id="CHEBI:30616"/>
        <dbReference type="ChEBI" id="CHEBI:43474"/>
        <dbReference type="ChEBI" id="CHEBI:456216"/>
        <dbReference type="EC" id="7.2.2.20"/>
    </reaction>
</comment>
<comment type="subunit">
    <text evidence="1">The complex is composed of two ATP-binding proteins (ZnuC), two transmembrane proteins (ZnuB) and a solute-binding protein (ZnuA).</text>
</comment>
<comment type="subcellular location">
    <subcellularLocation>
        <location evidence="1">Cell inner membrane</location>
        <topology evidence="1">Peripheral membrane protein</topology>
    </subcellularLocation>
</comment>
<comment type="similarity">
    <text evidence="1">Belongs to the ABC transporter superfamily. Zinc importer (TC 3.A.1.15.5) family.</text>
</comment>
<gene>
    <name evidence="1" type="primary">znuC</name>
    <name type="ordered locus">ERGA_CDS_02590</name>
</gene>
<proteinExistence type="inferred from homology"/>
<name>ZNUC_EHRRG</name>
<accession>Q5FHB0</accession>
<protein>
    <recommendedName>
        <fullName evidence="1">Zinc import ATP-binding protein ZnuC</fullName>
        <ecNumber evidence="1">7.2.2.20</ecNumber>
    </recommendedName>
</protein>